<feature type="chain" id="PRO_0000195325" description="Glucose-1-phosphate adenylyltransferase">
    <location>
        <begin position="1"/>
        <end position="431"/>
    </location>
</feature>
<feature type="binding site" evidence="1">
    <location>
        <position position="39"/>
    </location>
    <ligand>
        <name>beta-D-fructose 1,6-bisphosphate</name>
        <dbReference type="ChEBI" id="CHEBI:32966"/>
    </ligand>
</feature>
<feature type="binding site" evidence="1">
    <location>
        <position position="40"/>
    </location>
    <ligand>
        <name>AMP</name>
        <dbReference type="ChEBI" id="CHEBI:456215"/>
    </ligand>
</feature>
<feature type="binding site" evidence="1">
    <location>
        <position position="46"/>
    </location>
    <ligand>
        <name>AMP</name>
        <dbReference type="ChEBI" id="CHEBI:456215"/>
    </ligand>
</feature>
<feature type="binding site" evidence="1">
    <location>
        <position position="52"/>
    </location>
    <ligand>
        <name>AMP</name>
        <dbReference type="ChEBI" id="CHEBI:456215"/>
    </ligand>
</feature>
<feature type="binding site" evidence="1">
    <location>
        <position position="114"/>
    </location>
    <ligand>
        <name>alpha-D-glucose 1-phosphate</name>
        <dbReference type="ChEBI" id="CHEBI:58601"/>
    </ligand>
</feature>
<feature type="binding site" evidence="1">
    <location>
        <position position="130"/>
    </location>
    <ligand>
        <name>AMP</name>
        <dbReference type="ChEBI" id="CHEBI:456215"/>
    </ligand>
</feature>
<feature type="binding site" evidence="1">
    <location>
        <position position="179"/>
    </location>
    <ligand>
        <name>alpha-D-glucose 1-phosphate</name>
        <dbReference type="ChEBI" id="CHEBI:58601"/>
    </ligand>
</feature>
<feature type="binding site" evidence="1">
    <location>
        <begin position="194"/>
        <end position="195"/>
    </location>
    <ligand>
        <name>alpha-D-glucose 1-phosphate</name>
        <dbReference type="ChEBI" id="CHEBI:58601"/>
    </ligand>
</feature>
<feature type="binding site" evidence="1">
    <location>
        <position position="212"/>
    </location>
    <ligand>
        <name>alpha-D-glucose 1-phosphate</name>
        <dbReference type="ChEBI" id="CHEBI:58601"/>
    </ligand>
</feature>
<feature type="binding site" evidence="1">
    <location>
        <position position="370"/>
    </location>
    <ligand>
        <name>AMP</name>
        <dbReference type="ChEBI" id="CHEBI:456215"/>
    </ligand>
</feature>
<feature type="binding site" evidence="1">
    <location>
        <position position="386"/>
    </location>
    <ligand>
        <name>AMP</name>
        <dbReference type="ChEBI" id="CHEBI:456215"/>
    </ligand>
</feature>
<feature type="binding site" evidence="1">
    <location>
        <begin position="419"/>
        <end position="423"/>
    </location>
    <ligand>
        <name>beta-D-fructose 1,6-bisphosphate</name>
        <dbReference type="ChEBI" id="CHEBI:32966"/>
    </ligand>
</feature>
<feature type="binding site" evidence="1">
    <location>
        <begin position="429"/>
        <end position="431"/>
    </location>
    <ligand>
        <name>beta-D-fructose 1,6-bisphosphate</name>
        <dbReference type="ChEBI" id="CHEBI:32966"/>
    </ligand>
</feature>
<feature type="site" description="Could play a key role in the communication between the regulatory and the substrate sites" evidence="1">
    <location>
        <position position="74"/>
    </location>
</feature>
<feature type="site" description="Could play a key role in the communication between the regulatory and the substrate sites" evidence="1">
    <location>
        <position position="113"/>
    </location>
</feature>
<organism>
    <name type="scientific">Salmonella paratyphi A (strain ATCC 9150 / SARB42)</name>
    <dbReference type="NCBI Taxonomy" id="295319"/>
    <lineage>
        <taxon>Bacteria</taxon>
        <taxon>Pseudomonadati</taxon>
        <taxon>Pseudomonadota</taxon>
        <taxon>Gammaproteobacteria</taxon>
        <taxon>Enterobacterales</taxon>
        <taxon>Enterobacteriaceae</taxon>
        <taxon>Salmonella</taxon>
    </lineage>
</organism>
<reference key="1">
    <citation type="journal article" date="2004" name="Nat. Genet.">
        <title>Comparison of genome degradation in Paratyphi A and Typhi, human-restricted serovars of Salmonella enterica that cause typhoid.</title>
        <authorList>
            <person name="McClelland M."/>
            <person name="Sanderson K.E."/>
            <person name="Clifton S.W."/>
            <person name="Latreille P."/>
            <person name="Porwollik S."/>
            <person name="Sabo A."/>
            <person name="Meyer R."/>
            <person name="Bieri T."/>
            <person name="Ozersky P."/>
            <person name="McLellan M."/>
            <person name="Harkins C.R."/>
            <person name="Wang C."/>
            <person name="Nguyen C."/>
            <person name="Berghoff A."/>
            <person name="Elliott G."/>
            <person name="Kohlberg S."/>
            <person name="Strong C."/>
            <person name="Du F."/>
            <person name="Carter J."/>
            <person name="Kremizki C."/>
            <person name="Layman D."/>
            <person name="Leonard S."/>
            <person name="Sun H."/>
            <person name="Fulton L."/>
            <person name="Nash W."/>
            <person name="Miner T."/>
            <person name="Minx P."/>
            <person name="Delehaunty K."/>
            <person name="Fronick C."/>
            <person name="Magrini V."/>
            <person name="Nhan M."/>
            <person name="Warren W."/>
            <person name="Florea L."/>
            <person name="Spieth J."/>
            <person name="Wilson R.K."/>
        </authorList>
    </citation>
    <scope>NUCLEOTIDE SEQUENCE [LARGE SCALE GENOMIC DNA]</scope>
    <source>
        <strain>ATCC 9150 / SARB42</strain>
    </source>
</reference>
<name>GLGC_SALPA</name>
<keyword id="KW-0021">Allosteric enzyme</keyword>
<keyword id="KW-0067">ATP-binding</keyword>
<keyword id="KW-0119">Carbohydrate metabolism</keyword>
<keyword id="KW-0320">Glycogen biosynthesis</keyword>
<keyword id="KW-0321">Glycogen metabolism</keyword>
<keyword id="KW-0547">Nucleotide-binding</keyword>
<keyword id="KW-0548">Nucleotidyltransferase</keyword>
<keyword id="KW-0808">Transferase</keyword>
<dbReference type="EC" id="2.7.7.27" evidence="1"/>
<dbReference type="EMBL" id="CP000026">
    <property type="protein sequence ID" value="AAV79200.1"/>
    <property type="molecule type" value="Genomic_DNA"/>
</dbReference>
<dbReference type="RefSeq" id="WP_000253995.1">
    <property type="nucleotide sequence ID" value="NC_006511.1"/>
</dbReference>
<dbReference type="SMR" id="Q5PM08"/>
<dbReference type="KEGG" id="spt:SPA3387"/>
<dbReference type="HOGENOM" id="CLU_029499_14_1_6"/>
<dbReference type="UniPathway" id="UPA00164"/>
<dbReference type="Proteomes" id="UP000008185">
    <property type="component" value="Chromosome"/>
</dbReference>
<dbReference type="GO" id="GO:0005524">
    <property type="term" value="F:ATP binding"/>
    <property type="evidence" value="ECO:0007669"/>
    <property type="project" value="UniProtKB-KW"/>
</dbReference>
<dbReference type="GO" id="GO:0008878">
    <property type="term" value="F:glucose-1-phosphate adenylyltransferase activity"/>
    <property type="evidence" value="ECO:0007669"/>
    <property type="project" value="UniProtKB-UniRule"/>
</dbReference>
<dbReference type="GO" id="GO:0005978">
    <property type="term" value="P:glycogen biosynthetic process"/>
    <property type="evidence" value="ECO:0007669"/>
    <property type="project" value="UniProtKB-UniRule"/>
</dbReference>
<dbReference type="CDD" id="cd02508">
    <property type="entry name" value="ADP_Glucose_PP"/>
    <property type="match status" value="1"/>
</dbReference>
<dbReference type="CDD" id="cd04651">
    <property type="entry name" value="LbH_G1P_AT_C"/>
    <property type="match status" value="1"/>
</dbReference>
<dbReference type="FunFam" id="2.160.10.10:FF:000006">
    <property type="entry name" value="Glucose-1-phosphate adenylyltransferase"/>
    <property type="match status" value="1"/>
</dbReference>
<dbReference type="FunFam" id="3.90.550.10:FF:000014">
    <property type="entry name" value="Glucose-1-phosphate adenylyltransferase"/>
    <property type="match status" value="1"/>
</dbReference>
<dbReference type="Gene3D" id="2.160.10.10">
    <property type="entry name" value="Hexapeptide repeat proteins"/>
    <property type="match status" value="1"/>
</dbReference>
<dbReference type="Gene3D" id="3.90.550.10">
    <property type="entry name" value="Spore Coat Polysaccharide Biosynthesis Protein SpsA, Chain A"/>
    <property type="match status" value="1"/>
</dbReference>
<dbReference type="HAMAP" id="MF_00624">
    <property type="entry name" value="GlgC"/>
    <property type="match status" value="1"/>
</dbReference>
<dbReference type="InterPro" id="IPR011831">
    <property type="entry name" value="ADP-Glc_PPase"/>
</dbReference>
<dbReference type="InterPro" id="IPR005836">
    <property type="entry name" value="ADP_Glu_pyroP_CS"/>
</dbReference>
<dbReference type="InterPro" id="IPR023049">
    <property type="entry name" value="GlgC_bac"/>
</dbReference>
<dbReference type="InterPro" id="IPR056818">
    <property type="entry name" value="GlmU/GlgC-like_hexapep"/>
</dbReference>
<dbReference type="InterPro" id="IPR005835">
    <property type="entry name" value="NTP_transferase_dom"/>
</dbReference>
<dbReference type="InterPro" id="IPR029044">
    <property type="entry name" value="Nucleotide-diphossugar_trans"/>
</dbReference>
<dbReference type="InterPro" id="IPR011004">
    <property type="entry name" value="Trimer_LpxA-like_sf"/>
</dbReference>
<dbReference type="NCBIfam" id="TIGR02091">
    <property type="entry name" value="glgC"/>
    <property type="match status" value="1"/>
</dbReference>
<dbReference type="NCBIfam" id="NF001947">
    <property type="entry name" value="PRK00725.1"/>
    <property type="match status" value="1"/>
</dbReference>
<dbReference type="NCBIfam" id="NF002023">
    <property type="entry name" value="PRK00844.1"/>
    <property type="match status" value="1"/>
</dbReference>
<dbReference type="PANTHER" id="PTHR43523:SF2">
    <property type="entry name" value="GLUCOSE-1-PHOSPHATE ADENYLYLTRANSFERASE"/>
    <property type="match status" value="1"/>
</dbReference>
<dbReference type="PANTHER" id="PTHR43523">
    <property type="entry name" value="GLUCOSE-1-PHOSPHATE ADENYLYLTRANSFERASE-RELATED"/>
    <property type="match status" value="1"/>
</dbReference>
<dbReference type="Pfam" id="PF24894">
    <property type="entry name" value="Hexapep_GlmU"/>
    <property type="match status" value="1"/>
</dbReference>
<dbReference type="Pfam" id="PF00483">
    <property type="entry name" value="NTP_transferase"/>
    <property type="match status" value="1"/>
</dbReference>
<dbReference type="SUPFAM" id="SSF53448">
    <property type="entry name" value="Nucleotide-diphospho-sugar transferases"/>
    <property type="match status" value="1"/>
</dbReference>
<dbReference type="SUPFAM" id="SSF51161">
    <property type="entry name" value="Trimeric LpxA-like enzymes"/>
    <property type="match status" value="1"/>
</dbReference>
<dbReference type="PROSITE" id="PS00808">
    <property type="entry name" value="ADP_GLC_PYROPHOSPH_1"/>
    <property type="match status" value="1"/>
</dbReference>
<dbReference type="PROSITE" id="PS00809">
    <property type="entry name" value="ADP_GLC_PYROPHOSPH_2"/>
    <property type="match status" value="1"/>
</dbReference>
<dbReference type="PROSITE" id="PS00810">
    <property type="entry name" value="ADP_GLC_PYROPHOSPH_3"/>
    <property type="match status" value="1"/>
</dbReference>
<gene>
    <name evidence="1" type="primary">glgC</name>
    <name type="ordered locus">SPA3387</name>
</gene>
<protein>
    <recommendedName>
        <fullName evidence="1">Glucose-1-phosphate adenylyltransferase</fullName>
        <ecNumber evidence="1">2.7.7.27</ecNumber>
    </recommendedName>
    <alternativeName>
        <fullName evidence="1">ADP-glucose pyrophosphorylase</fullName>
        <shortName evidence="1">ADPGlc PPase</shortName>
    </alternativeName>
    <alternativeName>
        <fullName evidence="1">ADP-glucose synthase</fullName>
    </alternativeName>
</protein>
<sequence>MVSLEKNDRVMLARQLPLKSVALILAGGRGTRLKDLTNKRAKPAVHFGGKFRIIDFALSNCLNSGIRRIGVITQYQSHTLVQHIQRGWSLFSEEMNEFVDLLPAQQRMKGENWYRGTADAVTQNLDIIRRYKAEYVVILAGDHIYKQDYSRMLIDHVEKGARCTVACMPVPIKEATAFGVMAVDESDKIIDFVEKPANPPAMPGDASKSLASMGIYVFDADYLYELLAADDKDDASSHDFGKDIIPKITREGMAYAHPFPLSCVQSDPQAEPYWRDVGTLEAYWKANLDLASVTPELDMYDQNWPIRTHMESLPPAKFVQDRSGSHGMTLNSLVSGGCIISGSVVVQSVLFPRVRINSFCNIDSAVLLPEVWVGRSCRLRRCVIDRACIIPEGMVIGENAEEDARRFYRSEEGIVLVTREMLRKLQVKQER</sequence>
<accession>Q5PM08</accession>
<comment type="function">
    <text evidence="1">Involved in the biosynthesis of ADP-glucose, a building block required for the elongation reactions to produce glycogen. Catalyzes the reaction between ATP and alpha-D-glucose 1-phosphate (G1P) to produce pyrophosphate and ADP-Glc.</text>
</comment>
<comment type="catalytic activity">
    <reaction evidence="1">
        <text>alpha-D-glucose 1-phosphate + ATP + H(+) = ADP-alpha-D-glucose + diphosphate</text>
        <dbReference type="Rhea" id="RHEA:12120"/>
        <dbReference type="ChEBI" id="CHEBI:15378"/>
        <dbReference type="ChEBI" id="CHEBI:30616"/>
        <dbReference type="ChEBI" id="CHEBI:33019"/>
        <dbReference type="ChEBI" id="CHEBI:57498"/>
        <dbReference type="ChEBI" id="CHEBI:58601"/>
        <dbReference type="EC" id="2.7.7.27"/>
    </reaction>
</comment>
<comment type="activity regulation">
    <text evidence="1">Allosterically activated by fructose-1,6-bisphosphate (F16BP) and inhibited by AMP.</text>
</comment>
<comment type="pathway">
    <text evidence="1">Glycan biosynthesis; glycogen biosynthesis.</text>
</comment>
<comment type="subunit">
    <text evidence="1">Homotetramer.</text>
</comment>
<comment type="similarity">
    <text evidence="1">Belongs to the bacterial/plant glucose-1-phosphate adenylyltransferase family.</text>
</comment>
<evidence type="ECO:0000255" key="1">
    <source>
        <dbReference type="HAMAP-Rule" id="MF_00624"/>
    </source>
</evidence>
<proteinExistence type="inferred from homology"/>